<organism>
    <name type="scientific">Trichoplusia ni ascovirus 2c</name>
    <name type="common">TnAV-2c</name>
    <dbReference type="NCBI Taxonomy" id="328615"/>
    <lineage>
        <taxon>Viruses</taxon>
        <taxon>Varidnaviria</taxon>
        <taxon>Bamfordvirae</taxon>
        <taxon>Nucleocytoviricota</taxon>
        <taxon>Megaviricetes</taxon>
        <taxon>Pimascovirales</taxon>
        <taxon>Ascoviridae</taxon>
        <taxon>Ascovirus</taxon>
    </lineage>
</organism>
<dbReference type="EMBL" id="DQ517337">
    <property type="protein sequence ID" value="ABF70665.1"/>
    <property type="molecule type" value="Genomic_DNA"/>
</dbReference>
<dbReference type="RefSeq" id="YP_803371.1">
    <property type="nucleotide sequence ID" value="NC_008518.1"/>
</dbReference>
<dbReference type="KEGG" id="vg:5141742"/>
<dbReference type="OrthoDB" id="27147at10239"/>
<dbReference type="Proteomes" id="UP000001323">
    <property type="component" value="Genome"/>
</dbReference>
<dbReference type="GO" id="GO:0016020">
    <property type="term" value="C:membrane"/>
    <property type="evidence" value="ECO:0007669"/>
    <property type="project" value="UniProtKB-SubCell"/>
</dbReference>
<protein>
    <recommendedName>
        <fullName>Uncharacterized protein ORF149</fullName>
    </recommendedName>
</protein>
<reference key="1">
    <citation type="journal article" date="2006" name="Virology">
        <title>Sequence and organization of the Trichoplusia ni ascovirus 2c (Ascoviridae) genome.</title>
        <authorList>
            <person name="Wang L."/>
            <person name="Xue J."/>
            <person name="Seaborn C.P."/>
            <person name="Arif B.M."/>
            <person name="Cheng X.W."/>
        </authorList>
    </citation>
    <scope>NUCLEOTIDE SEQUENCE [LARGE SCALE GENOMIC DNA]</scope>
</reference>
<sequence>MSVLNTKINTSPRAYMLVKERGPFVIDVTVTPNTNFPYSYAITNTMSINLDSSYSDKNISWKSESGNTRITITGSVNSTESYLFLIKSDIEQNVTINIKNRNSSTTTTTNASSSDSSMYNTTRSTQRRVTYDDDDDEYDDKNYFGWSSSNGISDNITTSKFSEIFKKFSLLQWVLVAALAFFMYYFLWKKNRRGSDDYTTGSVYDMPLIDTPIRDSYRLPQSFKRDALYRTSI</sequence>
<feature type="chain" id="PRO_0000332718" description="Uncharacterized protein ORF149">
    <location>
        <begin position="1"/>
        <end position="233"/>
    </location>
</feature>
<feature type="transmembrane region" description="Helical" evidence="1">
    <location>
        <begin position="168"/>
        <end position="188"/>
    </location>
</feature>
<feature type="region of interest" description="Disordered" evidence="2">
    <location>
        <begin position="102"/>
        <end position="132"/>
    </location>
</feature>
<feature type="compositionally biased region" description="Low complexity" evidence="2">
    <location>
        <begin position="102"/>
        <end position="124"/>
    </location>
</feature>
<feature type="glycosylation site" description="N-linked (GlcNAc...) asparagine; by host" evidence="1">
    <location>
        <position position="58"/>
    </location>
</feature>
<feature type="glycosylation site" description="N-linked (GlcNAc...) asparagine; by host" evidence="1">
    <location>
        <position position="77"/>
    </location>
</feature>
<feature type="glycosylation site" description="N-linked (GlcNAc...) asparagine; by host" evidence="1">
    <location>
        <position position="93"/>
    </location>
</feature>
<feature type="glycosylation site" description="N-linked (GlcNAc...) asparagine; by host" evidence="1">
    <location>
        <position position="102"/>
    </location>
</feature>
<feature type="glycosylation site" description="N-linked (GlcNAc...) asparagine; by host" evidence="1">
    <location>
        <position position="110"/>
    </location>
</feature>
<feature type="glycosylation site" description="N-linked (GlcNAc...) asparagine; by host" evidence="1">
    <location>
        <position position="120"/>
    </location>
</feature>
<feature type="glycosylation site" description="N-linked (GlcNAc...) asparagine; by host" evidence="1">
    <location>
        <position position="155"/>
    </location>
</feature>
<accession>Q06VD4</accession>
<name>Y149_TNAVC</name>
<organismHost>
    <name type="scientific">Noctuidae</name>
    <name type="common">owlet moths</name>
    <dbReference type="NCBI Taxonomy" id="7100"/>
</organismHost>
<evidence type="ECO:0000255" key="1"/>
<evidence type="ECO:0000256" key="2">
    <source>
        <dbReference type="SAM" id="MobiDB-lite"/>
    </source>
</evidence>
<evidence type="ECO:0000305" key="3"/>
<comment type="subcellular location">
    <subcellularLocation>
        <location evidence="3">Membrane</location>
        <topology evidence="3">Single-pass membrane protein</topology>
    </subcellularLocation>
</comment>
<comment type="similarity">
    <text evidence="3">Belongs to the ascovirus HvAv ORF58 family.</text>
</comment>
<keyword id="KW-0325">Glycoprotein</keyword>
<keyword id="KW-0472">Membrane</keyword>
<keyword id="KW-1185">Reference proteome</keyword>
<keyword id="KW-0812">Transmembrane</keyword>
<keyword id="KW-1133">Transmembrane helix</keyword>
<proteinExistence type="inferred from homology"/>
<gene>
    <name type="ORF">ORF149</name>
</gene>